<reference key="1">
    <citation type="journal article" date="2007" name="BMC Genomics">
        <title>The full-ORF clone resource of the German cDNA consortium.</title>
        <authorList>
            <person name="Bechtel S."/>
            <person name="Rosenfelder H."/>
            <person name="Duda A."/>
            <person name="Schmidt C.P."/>
            <person name="Ernst U."/>
            <person name="Wellenreuther R."/>
            <person name="Mehrle A."/>
            <person name="Schuster C."/>
            <person name="Bahr A."/>
            <person name="Bloecker H."/>
            <person name="Heubner D."/>
            <person name="Hoerlein A."/>
            <person name="Michel G."/>
            <person name="Wedler H."/>
            <person name="Koehrer K."/>
            <person name="Ottenwaelder B."/>
            <person name="Poustka A."/>
            <person name="Wiemann S."/>
            <person name="Schupp I."/>
        </authorList>
    </citation>
    <scope>NUCLEOTIDE SEQUENCE [LARGE SCALE MRNA]</scope>
    <source>
        <tissue>Hippocampus</tissue>
    </source>
</reference>
<reference key="2">
    <citation type="journal article" date="2006" name="Nature">
        <title>Analysis of the DNA sequence and duplication history of human chromosome 15.</title>
        <authorList>
            <person name="Zody M.C."/>
            <person name="Garber M."/>
            <person name="Sharpe T."/>
            <person name="Young S.K."/>
            <person name="Rowen L."/>
            <person name="O'Neill K."/>
            <person name="Whittaker C.A."/>
            <person name="Kamal M."/>
            <person name="Chang J.L."/>
            <person name="Cuomo C.A."/>
            <person name="Dewar K."/>
            <person name="FitzGerald M.G."/>
            <person name="Kodira C.D."/>
            <person name="Madan A."/>
            <person name="Qin S."/>
            <person name="Yang X."/>
            <person name="Abbasi N."/>
            <person name="Abouelleil A."/>
            <person name="Arachchi H.M."/>
            <person name="Baradarani L."/>
            <person name="Birditt B."/>
            <person name="Bloom S."/>
            <person name="Bloom T."/>
            <person name="Borowsky M.L."/>
            <person name="Burke J."/>
            <person name="Butler J."/>
            <person name="Cook A."/>
            <person name="DeArellano K."/>
            <person name="DeCaprio D."/>
            <person name="Dorris L. III"/>
            <person name="Dors M."/>
            <person name="Eichler E.E."/>
            <person name="Engels R."/>
            <person name="Fahey J."/>
            <person name="Fleetwood P."/>
            <person name="Friedman C."/>
            <person name="Gearin G."/>
            <person name="Hall J.L."/>
            <person name="Hensley G."/>
            <person name="Johnson E."/>
            <person name="Jones C."/>
            <person name="Kamat A."/>
            <person name="Kaur A."/>
            <person name="Locke D.P."/>
            <person name="Madan A."/>
            <person name="Munson G."/>
            <person name="Jaffe D.B."/>
            <person name="Lui A."/>
            <person name="Macdonald P."/>
            <person name="Mauceli E."/>
            <person name="Naylor J.W."/>
            <person name="Nesbitt R."/>
            <person name="Nicol R."/>
            <person name="O'Leary S.B."/>
            <person name="Ratcliffe A."/>
            <person name="Rounsley S."/>
            <person name="She X."/>
            <person name="Sneddon K.M.B."/>
            <person name="Stewart S."/>
            <person name="Sougnez C."/>
            <person name="Stone S.M."/>
            <person name="Topham K."/>
            <person name="Vincent D."/>
            <person name="Wang S."/>
            <person name="Zimmer A.R."/>
            <person name="Birren B.W."/>
            <person name="Hood L."/>
            <person name="Lander E.S."/>
            <person name="Nusbaum C."/>
        </authorList>
    </citation>
    <scope>NUCLEOTIDE SEQUENCE [LARGE SCALE GENOMIC DNA]</scope>
</reference>
<protein>
    <recommendedName>
        <fullName>Cortexin-2</fullName>
    </recommendedName>
</protein>
<feature type="chain" id="PRO_0000284616" description="Cortexin-2">
    <location>
        <begin position="1"/>
        <end position="81"/>
    </location>
</feature>
<feature type="transmembrane region" description="Helical" evidence="1">
    <location>
        <begin position="29"/>
        <end position="49"/>
    </location>
</feature>
<accession>P0C2S0</accession>
<keyword id="KW-0472">Membrane</keyword>
<keyword id="KW-1185">Reference proteome</keyword>
<keyword id="KW-0812">Transmembrane</keyword>
<keyword id="KW-1133">Transmembrane helix</keyword>
<organism>
    <name type="scientific">Homo sapiens</name>
    <name type="common">Human</name>
    <dbReference type="NCBI Taxonomy" id="9606"/>
    <lineage>
        <taxon>Eukaryota</taxon>
        <taxon>Metazoa</taxon>
        <taxon>Chordata</taxon>
        <taxon>Craniata</taxon>
        <taxon>Vertebrata</taxon>
        <taxon>Euteleostomi</taxon>
        <taxon>Mammalia</taxon>
        <taxon>Eutheria</taxon>
        <taxon>Euarchontoglires</taxon>
        <taxon>Primates</taxon>
        <taxon>Haplorrhini</taxon>
        <taxon>Catarrhini</taxon>
        <taxon>Hominidae</taxon>
        <taxon>Homo</taxon>
    </lineage>
</organism>
<proteinExistence type="inferred from homology"/>
<sequence length="81" mass="8980">MSSTYCGNSSAKMSVNEVSAFSLTLEQKTGFAFVGILCIFLGLLIIRCFKILLDPYSSMPSSTWEDEVEEFDKGTFEYALA</sequence>
<evidence type="ECO:0000255" key="1"/>
<evidence type="ECO:0000305" key="2"/>
<comment type="subcellular location">
    <subcellularLocation>
        <location evidence="2">Membrane</location>
        <topology evidence="2">Single-pass membrane protein</topology>
    </subcellularLocation>
</comment>
<comment type="similarity">
    <text evidence="2">Belongs to the cortexin family.</text>
</comment>
<dbReference type="EMBL" id="BX537772">
    <property type="status" value="NOT_ANNOTATED_CDS"/>
    <property type="molecule type" value="mRNA"/>
</dbReference>
<dbReference type="EMBL" id="AC066612">
    <property type="status" value="NOT_ANNOTATED_CDS"/>
    <property type="molecule type" value="Genomic_DNA"/>
</dbReference>
<dbReference type="CCDS" id="CCDS45254.1"/>
<dbReference type="RefSeq" id="NP_001139140.1">
    <property type="nucleotide sequence ID" value="NM_001145668.2"/>
</dbReference>
<dbReference type="RefSeq" id="NP_001357344.1">
    <property type="nucleotide sequence ID" value="NM_001370415.1"/>
</dbReference>
<dbReference type="RefSeq" id="NP_001357345.1">
    <property type="nucleotide sequence ID" value="NM_001370416.1"/>
</dbReference>
<dbReference type="RefSeq" id="XP_005254435.1">
    <property type="nucleotide sequence ID" value="XM_005254378.3"/>
</dbReference>
<dbReference type="RefSeq" id="XP_006720567.1">
    <property type="nucleotide sequence ID" value="XM_006720504.3"/>
</dbReference>
<dbReference type="RefSeq" id="XP_011519855.1">
    <property type="nucleotide sequence ID" value="XM_011521553.1"/>
</dbReference>
<dbReference type="RefSeq" id="XP_016877667.1">
    <property type="nucleotide sequence ID" value="XM_017022178.2"/>
</dbReference>
<dbReference type="RefSeq" id="XP_047288450.1">
    <property type="nucleotide sequence ID" value="XM_047432494.1"/>
</dbReference>
<dbReference type="RefSeq" id="XP_054233873.1">
    <property type="nucleotide sequence ID" value="XM_054377898.1"/>
</dbReference>
<dbReference type="RefSeq" id="XP_054233874.1">
    <property type="nucleotide sequence ID" value="XM_054377899.1"/>
</dbReference>
<dbReference type="RefSeq" id="XP_054233875.1">
    <property type="nucleotide sequence ID" value="XM_054377900.1"/>
</dbReference>
<dbReference type="SMR" id="P0C2S0"/>
<dbReference type="FunCoup" id="P0C2S0">
    <property type="interactions" value="8"/>
</dbReference>
<dbReference type="STRING" id="9606.ENSP00000495988"/>
<dbReference type="BioMuta" id="CTXN2"/>
<dbReference type="DMDM" id="145558892"/>
<dbReference type="PaxDb" id="9606-ENSP00000406145"/>
<dbReference type="ProteomicsDB" id="52304"/>
<dbReference type="Antibodypedia" id="65141">
    <property type="antibodies" value="5 antibodies from 5 providers"/>
</dbReference>
<dbReference type="DNASU" id="399697"/>
<dbReference type="Ensembl" id="ENST00000417307.3">
    <property type="protein sequence ID" value="ENSP00000406145.2"/>
    <property type="gene ID" value="ENSG00000233932.6"/>
</dbReference>
<dbReference type="Ensembl" id="ENST00000644354.1">
    <property type="protein sequence ID" value="ENSP00000495988.1"/>
    <property type="gene ID" value="ENSG00000233932.6"/>
</dbReference>
<dbReference type="Ensembl" id="ENST00000645050.1">
    <property type="protein sequence ID" value="ENSP00000495979.1"/>
    <property type="gene ID" value="ENSG00000233932.6"/>
</dbReference>
<dbReference type="Ensembl" id="ENST00000647363.1">
    <property type="protein sequence ID" value="ENSP00000493942.1"/>
    <property type="gene ID" value="ENSG00000233932.6"/>
</dbReference>
<dbReference type="GeneID" id="399697"/>
<dbReference type="KEGG" id="hsa:399697"/>
<dbReference type="MANE-Select" id="ENST00000417307.3">
    <property type="protein sequence ID" value="ENSP00000406145.2"/>
    <property type="RefSeq nucleotide sequence ID" value="NM_001145668.2"/>
    <property type="RefSeq protein sequence ID" value="NP_001139140.1"/>
</dbReference>
<dbReference type="UCSC" id="uc001zwm.2">
    <property type="organism name" value="human"/>
</dbReference>
<dbReference type="AGR" id="HGNC:31109"/>
<dbReference type="CTD" id="399697"/>
<dbReference type="GeneCards" id="CTXN2"/>
<dbReference type="HGNC" id="HGNC:31109">
    <property type="gene designation" value="CTXN2"/>
</dbReference>
<dbReference type="HPA" id="ENSG00000233932">
    <property type="expression patterns" value="Tissue enhanced (brain, pituitary gland, retina)"/>
</dbReference>
<dbReference type="neXtProt" id="NX_P0C2S0"/>
<dbReference type="OpenTargets" id="ENSG00000233932"/>
<dbReference type="PharmGKB" id="PA134951739"/>
<dbReference type="VEuPathDB" id="HostDB:ENSG00000233932"/>
<dbReference type="eggNOG" id="ENOG502S3V3">
    <property type="taxonomic scope" value="Eukaryota"/>
</dbReference>
<dbReference type="GeneTree" id="ENSGT00940000154412"/>
<dbReference type="HOGENOM" id="CLU_193122_0_0_1"/>
<dbReference type="InParanoid" id="P0C2S0"/>
<dbReference type="OMA" id="GNDIMAH"/>
<dbReference type="OrthoDB" id="9947540at2759"/>
<dbReference type="PAN-GO" id="P0C2S0">
    <property type="GO annotations" value="0 GO annotations based on evolutionary models"/>
</dbReference>
<dbReference type="PhylomeDB" id="P0C2S0"/>
<dbReference type="TreeFam" id="TF333403"/>
<dbReference type="PathwayCommons" id="P0C2S0"/>
<dbReference type="BioGRID-ORCS" id="399697">
    <property type="hits" value="2 hits in 1117 CRISPR screens"/>
</dbReference>
<dbReference type="GenomeRNAi" id="399697"/>
<dbReference type="Pharos" id="P0C2S0">
    <property type="development level" value="Tdark"/>
</dbReference>
<dbReference type="PRO" id="PR:P0C2S0"/>
<dbReference type="Proteomes" id="UP000005640">
    <property type="component" value="Chromosome 15"/>
</dbReference>
<dbReference type="RNAct" id="P0C2S0">
    <property type="molecule type" value="protein"/>
</dbReference>
<dbReference type="Bgee" id="ENSG00000233932">
    <property type="expression patterns" value="Expressed in prefrontal cortex and 37 other cell types or tissues"/>
</dbReference>
<dbReference type="GO" id="GO:0016020">
    <property type="term" value="C:membrane"/>
    <property type="evidence" value="ECO:0007669"/>
    <property type="project" value="UniProtKB-SubCell"/>
</dbReference>
<dbReference type="InterPro" id="IPR020066">
    <property type="entry name" value="Cortexin"/>
</dbReference>
<dbReference type="PANTHER" id="PTHR16736">
    <property type="entry name" value="CORTEXIN-1-RELATED"/>
    <property type="match status" value="1"/>
</dbReference>
<dbReference type="PANTHER" id="PTHR16736:SF2">
    <property type="entry name" value="CORTEXIN-2"/>
    <property type="match status" value="1"/>
</dbReference>
<dbReference type="Pfam" id="PF11057">
    <property type="entry name" value="Cortexin"/>
    <property type="match status" value="1"/>
</dbReference>
<name>CTXN2_HUMAN</name>
<gene>
    <name type="primary">CTXN2</name>
</gene>